<comment type="function">
    <text evidence="1">Produces ATP from ADP in the presence of a proton gradient across the membrane.</text>
</comment>
<comment type="subunit">
    <text evidence="1">F-type ATPases have 2 components, CF(1) - the catalytic core - and CF(0) - the membrane proton channel. CF(1) has five subunits: alpha(3), beta(3), gamma(1), delta(1), epsilon(1). CF(0) has three main subunits: a, b and c.</text>
</comment>
<comment type="subcellular location">
    <subcellularLocation>
        <location evidence="1">Cell inner membrane</location>
        <topology evidence="1">Peripheral membrane protein</topology>
    </subcellularLocation>
</comment>
<comment type="similarity">
    <text evidence="1">Belongs to the ATPase epsilon chain family.</text>
</comment>
<feature type="chain" id="PRO_1000127833" description="ATP synthase epsilon chain">
    <location>
        <begin position="1"/>
        <end position="141"/>
    </location>
</feature>
<proteinExistence type="inferred from homology"/>
<accession>B2JJ94</accession>
<organism>
    <name type="scientific">Paraburkholderia phymatum (strain DSM 17167 / CIP 108236 / LMG 21445 / STM815)</name>
    <name type="common">Burkholderia phymatum</name>
    <dbReference type="NCBI Taxonomy" id="391038"/>
    <lineage>
        <taxon>Bacteria</taxon>
        <taxon>Pseudomonadati</taxon>
        <taxon>Pseudomonadota</taxon>
        <taxon>Betaproteobacteria</taxon>
        <taxon>Burkholderiales</taxon>
        <taxon>Burkholderiaceae</taxon>
        <taxon>Paraburkholderia</taxon>
    </lineage>
</organism>
<protein>
    <recommendedName>
        <fullName evidence="1">ATP synthase epsilon chain</fullName>
    </recommendedName>
    <alternativeName>
        <fullName evidence="1">ATP synthase F1 sector epsilon subunit</fullName>
    </alternativeName>
    <alternativeName>
        <fullName evidence="1">F-ATPase epsilon subunit</fullName>
    </alternativeName>
</protein>
<reference key="1">
    <citation type="journal article" date="2014" name="Stand. Genomic Sci.">
        <title>Complete genome sequence of Burkholderia phymatum STM815(T), a broad host range and efficient nitrogen-fixing symbiont of Mimosa species.</title>
        <authorList>
            <person name="Moulin L."/>
            <person name="Klonowska A."/>
            <person name="Caroline B."/>
            <person name="Booth K."/>
            <person name="Vriezen J.A."/>
            <person name="Melkonian R."/>
            <person name="James E.K."/>
            <person name="Young J.P."/>
            <person name="Bena G."/>
            <person name="Hauser L."/>
            <person name="Land M."/>
            <person name="Kyrpides N."/>
            <person name="Bruce D."/>
            <person name="Chain P."/>
            <person name="Copeland A."/>
            <person name="Pitluck S."/>
            <person name="Woyke T."/>
            <person name="Lizotte-Waniewski M."/>
            <person name="Bristow J."/>
            <person name="Riley M."/>
        </authorList>
    </citation>
    <scope>NUCLEOTIDE SEQUENCE [LARGE SCALE GENOMIC DNA]</scope>
    <source>
        <strain>DSM 17167 / CIP 108236 / LMG 21445 / STM815</strain>
    </source>
</reference>
<keyword id="KW-0066">ATP synthesis</keyword>
<keyword id="KW-0997">Cell inner membrane</keyword>
<keyword id="KW-1003">Cell membrane</keyword>
<keyword id="KW-0139">CF(1)</keyword>
<keyword id="KW-0375">Hydrogen ion transport</keyword>
<keyword id="KW-0406">Ion transport</keyword>
<keyword id="KW-0472">Membrane</keyword>
<keyword id="KW-1185">Reference proteome</keyword>
<keyword id="KW-0813">Transport</keyword>
<sequence>MATIKVDVVSAEEQIFSGQAKFVALPGEAGELGILPGHTPLITRIRPGAVRIESENGEEEFVFVAGGILEVQPGAVTVLADTAIRGKDLDEAKAEQARKRAEEALQNTGSNLEYATAQAELAYATAQLAAIQRLRKLRGQH</sequence>
<evidence type="ECO:0000255" key="1">
    <source>
        <dbReference type="HAMAP-Rule" id="MF_00530"/>
    </source>
</evidence>
<dbReference type="EMBL" id="CP001043">
    <property type="protein sequence ID" value="ACC72196.1"/>
    <property type="molecule type" value="Genomic_DNA"/>
</dbReference>
<dbReference type="RefSeq" id="WP_012402374.1">
    <property type="nucleotide sequence ID" value="NC_010622.1"/>
</dbReference>
<dbReference type="SMR" id="B2JJ94"/>
<dbReference type="STRING" id="391038.Bphy_3026"/>
<dbReference type="KEGG" id="bph:Bphy_3026"/>
<dbReference type="eggNOG" id="COG0355">
    <property type="taxonomic scope" value="Bacteria"/>
</dbReference>
<dbReference type="HOGENOM" id="CLU_084338_2_0_4"/>
<dbReference type="OrthoDB" id="9791445at2"/>
<dbReference type="Proteomes" id="UP000001192">
    <property type="component" value="Chromosome 1"/>
</dbReference>
<dbReference type="GO" id="GO:0005886">
    <property type="term" value="C:plasma membrane"/>
    <property type="evidence" value="ECO:0007669"/>
    <property type="project" value="UniProtKB-SubCell"/>
</dbReference>
<dbReference type="GO" id="GO:0045259">
    <property type="term" value="C:proton-transporting ATP synthase complex"/>
    <property type="evidence" value="ECO:0007669"/>
    <property type="project" value="UniProtKB-KW"/>
</dbReference>
<dbReference type="GO" id="GO:0005524">
    <property type="term" value="F:ATP binding"/>
    <property type="evidence" value="ECO:0007669"/>
    <property type="project" value="UniProtKB-UniRule"/>
</dbReference>
<dbReference type="GO" id="GO:0046933">
    <property type="term" value="F:proton-transporting ATP synthase activity, rotational mechanism"/>
    <property type="evidence" value="ECO:0007669"/>
    <property type="project" value="UniProtKB-UniRule"/>
</dbReference>
<dbReference type="CDD" id="cd12152">
    <property type="entry name" value="F1-ATPase_delta"/>
    <property type="match status" value="1"/>
</dbReference>
<dbReference type="FunFam" id="2.60.15.10:FF:000001">
    <property type="entry name" value="ATP synthase epsilon chain"/>
    <property type="match status" value="1"/>
</dbReference>
<dbReference type="Gene3D" id="1.20.5.440">
    <property type="entry name" value="ATP synthase delta/epsilon subunit, C-terminal domain"/>
    <property type="match status" value="1"/>
</dbReference>
<dbReference type="Gene3D" id="2.60.15.10">
    <property type="entry name" value="F0F1 ATP synthase delta/epsilon subunit, N-terminal"/>
    <property type="match status" value="1"/>
</dbReference>
<dbReference type="HAMAP" id="MF_00530">
    <property type="entry name" value="ATP_synth_epsil_bac"/>
    <property type="match status" value="1"/>
</dbReference>
<dbReference type="InterPro" id="IPR036794">
    <property type="entry name" value="ATP_F1_dsu/esu_C_sf"/>
</dbReference>
<dbReference type="InterPro" id="IPR001469">
    <property type="entry name" value="ATP_synth_F1_dsu/esu"/>
</dbReference>
<dbReference type="InterPro" id="IPR020546">
    <property type="entry name" value="ATP_synth_F1_dsu/esu_N"/>
</dbReference>
<dbReference type="InterPro" id="IPR020547">
    <property type="entry name" value="ATP_synth_F1_esu_C"/>
</dbReference>
<dbReference type="InterPro" id="IPR036771">
    <property type="entry name" value="ATPsynth_dsu/esu_N"/>
</dbReference>
<dbReference type="NCBIfam" id="TIGR01216">
    <property type="entry name" value="ATP_synt_epsi"/>
    <property type="match status" value="1"/>
</dbReference>
<dbReference type="NCBIfam" id="NF001847">
    <property type="entry name" value="PRK00571.1-4"/>
    <property type="match status" value="1"/>
</dbReference>
<dbReference type="PANTHER" id="PTHR13822">
    <property type="entry name" value="ATP SYNTHASE DELTA/EPSILON CHAIN"/>
    <property type="match status" value="1"/>
</dbReference>
<dbReference type="PANTHER" id="PTHR13822:SF10">
    <property type="entry name" value="ATP SYNTHASE EPSILON CHAIN, CHLOROPLASTIC"/>
    <property type="match status" value="1"/>
</dbReference>
<dbReference type="Pfam" id="PF00401">
    <property type="entry name" value="ATP-synt_DE"/>
    <property type="match status" value="1"/>
</dbReference>
<dbReference type="Pfam" id="PF02823">
    <property type="entry name" value="ATP-synt_DE_N"/>
    <property type="match status" value="1"/>
</dbReference>
<dbReference type="SUPFAM" id="SSF46604">
    <property type="entry name" value="Epsilon subunit of F1F0-ATP synthase C-terminal domain"/>
    <property type="match status" value="1"/>
</dbReference>
<dbReference type="SUPFAM" id="SSF51344">
    <property type="entry name" value="Epsilon subunit of F1F0-ATP synthase N-terminal domain"/>
    <property type="match status" value="1"/>
</dbReference>
<name>ATPE_PARP8</name>
<gene>
    <name evidence="1" type="primary">atpC</name>
    <name type="ordered locus">Bphy_3026</name>
</gene>